<feature type="chain" id="PRO_1000055804" description="Large ribosomal subunit protein bL17">
    <location>
        <begin position="1"/>
        <end position="113"/>
    </location>
</feature>
<name>RL17_CLOBL</name>
<protein>
    <recommendedName>
        <fullName evidence="1">Large ribosomal subunit protein bL17</fullName>
    </recommendedName>
    <alternativeName>
        <fullName evidence="2">50S ribosomal protein L17</fullName>
    </alternativeName>
</protein>
<gene>
    <name evidence="1" type="primary">rplQ</name>
    <name type="ordered locus">CLI_3633</name>
</gene>
<reference key="1">
    <citation type="submission" date="2007-06" db="EMBL/GenBank/DDBJ databases">
        <authorList>
            <person name="Brinkac L.M."/>
            <person name="Daugherty S."/>
            <person name="Dodson R.J."/>
            <person name="Madupu R."/>
            <person name="Brown J.L."/>
            <person name="Bruce D."/>
            <person name="Detter C."/>
            <person name="Munk C."/>
            <person name="Smith L.A."/>
            <person name="Smith T.J."/>
            <person name="White O."/>
            <person name="Brettin T.S."/>
        </authorList>
    </citation>
    <scope>NUCLEOTIDE SEQUENCE [LARGE SCALE GENOMIC DNA]</scope>
    <source>
        <strain>Langeland / NCTC 10281 / Type F</strain>
    </source>
</reference>
<comment type="subunit">
    <text evidence="1">Part of the 50S ribosomal subunit. Contacts protein L32.</text>
</comment>
<comment type="similarity">
    <text evidence="1">Belongs to the bacterial ribosomal protein bL17 family.</text>
</comment>
<sequence>MAGYRKLGRPTDQRKAMLRNLVTSFLKHGKIETTETRAKETRSIAEKMITLAKRGDLHARRQVLSFVTEETVVQRLFEEIAPKYAERNGGYTRIYKVGPRRGDGAEVVILELV</sequence>
<accession>A7GJ44</accession>
<keyword id="KW-0687">Ribonucleoprotein</keyword>
<keyword id="KW-0689">Ribosomal protein</keyword>
<dbReference type="EMBL" id="CP000728">
    <property type="protein sequence ID" value="ABS39356.1"/>
    <property type="molecule type" value="Genomic_DNA"/>
</dbReference>
<dbReference type="RefSeq" id="WP_003357477.1">
    <property type="nucleotide sequence ID" value="NC_009699.1"/>
</dbReference>
<dbReference type="SMR" id="A7GJ44"/>
<dbReference type="GeneID" id="5187110"/>
<dbReference type="KEGG" id="cbf:CLI_3633"/>
<dbReference type="HOGENOM" id="CLU_074407_2_2_9"/>
<dbReference type="Proteomes" id="UP000002410">
    <property type="component" value="Chromosome"/>
</dbReference>
<dbReference type="GO" id="GO:0022625">
    <property type="term" value="C:cytosolic large ribosomal subunit"/>
    <property type="evidence" value="ECO:0007669"/>
    <property type="project" value="TreeGrafter"/>
</dbReference>
<dbReference type="GO" id="GO:0003735">
    <property type="term" value="F:structural constituent of ribosome"/>
    <property type="evidence" value="ECO:0007669"/>
    <property type="project" value="InterPro"/>
</dbReference>
<dbReference type="GO" id="GO:0006412">
    <property type="term" value="P:translation"/>
    <property type="evidence" value="ECO:0007669"/>
    <property type="project" value="UniProtKB-UniRule"/>
</dbReference>
<dbReference type="FunFam" id="3.90.1030.10:FF:000002">
    <property type="entry name" value="50S ribosomal protein L17"/>
    <property type="match status" value="1"/>
</dbReference>
<dbReference type="Gene3D" id="3.90.1030.10">
    <property type="entry name" value="Ribosomal protein L17"/>
    <property type="match status" value="1"/>
</dbReference>
<dbReference type="HAMAP" id="MF_01368">
    <property type="entry name" value="Ribosomal_bL17"/>
    <property type="match status" value="1"/>
</dbReference>
<dbReference type="InterPro" id="IPR000456">
    <property type="entry name" value="Ribosomal_bL17"/>
</dbReference>
<dbReference type="InterPro" id="IPR047859">
    <property type="entry name" value="Ribosomal_bL17_CS"/>
</dbReference>
<dbReference type="InterPro" id="IPR036373">
    <property type="entry name" value="Ribosomal_bL17_sf"/>
</dbReference>
<dbReference type="NCBIfam" id="TIGR00059">
    <property type="entry name" value="L17"/>
    <property type="match status" value="1"/>
</dbReference>
<dbReference type="PANTHER" id="PTHR14413:SF16">
    <property type="entry name" value="LARGE RIBOSOMAL SUBUNIT PROTEIN BL17M"/>
    <property type="match status" value="1"/>
</dbReference>
<dbReference type="PANTHER" id="PTHR14413">
    <property type="entry name" value="RIBOSOMAL PROTEIN L17"/>
    <property type="match status" value="1"/>
</dbReference>
<dbReference type="Pfam" id="PF01196">
    <property type="entry name" value="Ribosomal_L17"/>
    <property type="match status" value="1"/>
</dbReference>
<dbReference type="SUPFAM" id="SSF64263">
    <property type="entry name" value="Prokaryotic ribosomal protein L17"/>
    <property type="match status" value="1"/>
</dbReference>
<dbReference type="PROSITE" id="PS01167">
    <property type="entry name" value="RIBOSOMAL_L17"/>
    <property type="match status" value="1"/>
</dbReference>
<organism>
    <name type="scientific">Clostridium botulinum (strain Langeland / NCTC 10281 / Type F)</name>
    <dbReference type="NCBI Taxonomy" id="441772"/>
    <lineage>
        <taxon>Bacteria</taxon>
        <taxon>Bacillati</taxon>
        <taxon>Bacillota</taxon>
        <taxon>Clostridia</taxon>
        <taxon>Eubacteriales</taxon>
        <taxon>Clostridiaceae</taxon>
        <taxon>Clostridium</taxon>
    </lineage>
</organism>
<proteinExistence type="inferred from homology"/>
<evidence type="ECO:0000255" key="1">
    <source>
        <dbReference type="HAMAP-Rule" id="MF_01368"/>
    </source>
</evidence>
<evidence type="ECO:0000305" key="2"/>